<dbReference type="EC" id="2.7.4.8" evidence="1"/>
<dbReference type="EMBL" id="CP000061">
    <property type="protein sequence ID" value="ABC65772.1"/>
    <property type="molecule type" value="Genomic_DNA"/>
</dbReference>
<dbReference type="RefSeq" id="WP_011412933.1">
    <property type="nucleotide sequence ID" value="NC_007716.1"/>
</dbReference>
<dbReference type="SMR" id="Q2NIH1"/>
<dbReference type="STRING" id="322098.AYWB_655"/>
<dbReference type="KEGG" id="ayw:AYWB_655"/>
<dbReference type="eggNOG" id="COG0194">
    <property type="taxonomic scope" value="Bacteria"/>
</dbReference>
<dbReference type="HOGENOM" id="CLU_001715_1_2_14"/>
<dbReference type="OrthoDB" id="9808150at2"/>
<dbReference type="PhylomeDB" id="Q2NIH1"/>
<dbReference type="Proteomes" id="UP000001934">
    <property type="component" value="Chromosome"/>
</dbReference>
<dbReference type="GO" id="GO:0005829">
    <property type="term" value="C:cytosol"/>
    <property type="evidence" value="ECO:0007669"/>
    <property type="project" value="TreeGrafter"/>
</dbReference>
<dbReference type="GO" id="GO:0005524">
    <property type="term" value="F:ATP binding"/>
    <property type="evidence" value="ECO:0007669"/>
    <property type="project" value="UniProtKB-UniRule"/>
</dbReference>
<dbReference type="GO" id="GO:0004385">
    <property type="term" value="F:guanylate kinase activity"/>
    <property type="evidence" value="ECO:0007669"/>
    <property type="project" value="UniProtKB-UniRule"/>
</dbReference>
<dbReference type="CDD" id="cd00071">
    <property type="entry name" value="GMPK"/>
    <property type="match status" value="1"/>
</dbReference>
<dbReference type="FunFam" id="3.30.63.10:FF:000002">
    <property type="entry name" value="Guanylate kinase 1"/>
    <property type="match status" value="1"/>
</dbReference>
<dbReference type="Gene3D" id="3.30.63.10">
    <property type="entry name" value="Guanylate Kinase phosphate binding domain"/>
    <property type="match status" value="1"/>
</dbReference>
<dbReference type="Gene3D" id="3.40.50.300">
    <property type="entry name" value="P-loop containing nucleotide triphosphate hydrolases"/>
    <property type="match status" value="1"/>
</dbReference>
<dbReference type="HAMAP" id="MF_00328">
    <property type="entry name" value="Guanylate_kinase"/>
    <property type="match status" value="1"/>
</dbReference>
<dbReference type="InterPro" id="IPR008145">
    <property type="entry name" value="GK/Ca_channel_bsu"/>
</dbReference>
<dbReference type="InterPro" id="IPR008144">
    <property type="entry name" value="Guanylate_kin-like_dom"/>
</dbReference>
<dbReference type="InterPro" id="IPR017665">
    <property type="entry name" value="Guanylate_kinase"/>
</dbReference>
<dbReference type="InterPro" id="IPR020590">
    <property type="entry name" value="Guanylate_kinase_CS"/>
</dbReference>
<dbReference type="InterPro" id="IPR027417">
    <property type="entry name" value="P-loop_NTPase"/>
</dbReference>
<dbReference type="NCBIfam" id="TIGR03263">
    <property type="entry name" value="guanyl_kin"/>
    <property type="match status" value="1"/>
</dbReference>
<dbReference type="PANTHER" id="PTHR23117:SF13">
    <property type="entry name" value="GUANYLATE KINASE"/>
    <property type="match status" value="1"/>
</dbReference>
<dbReference type="PANTHER" id="PTHR23117">
    <property type="entry name" value="GUANYLATE KINASE-RELATED"/>
    <property type="match status" value="1"/>
</dbReference>
<dbReference type="Pfam" id="PF00625">
    <property type="entry name" value="Guanylate_kin"/>
    <property type="match status" value="1"/>
</dbReference>
<dbReference type="SMART" id="SM00072">
    <property type="entry name" value="GuKc"/>
    <property type="match status" value="1"/>
</dbReference>
<dbReference type="SUPFAM" id="SSF52540">
    <property type="entry name" value="P-loop containing nucleoside triphosphate hydrolases"/>
    <property type="match status" value="1"/>
</dbReference>
<dbReference type="PROSITE" id="PS00856">
    <property type="entry name" value="GUANYLATE_KINASE_1"/>
    <property type="match status" value="1"/>
</dbReference>
<dbReference type="PROSITE" id="PS50052">
    <property type="entry name" value="GUANYLATE_KINASE_2"/>
    <property type="match status" value="1"/>
</dbReference>
<feature type="chain" id="PRO_0000266286" description="Guanylate kinase">
    <location>
        <begin position="1"/>
        <end position="211"/>
    </location>
</feature>
<feature type="domain" description="Guanylate kinase-like" evidence="1">
    <location>
        <begin position="7"/>
        <end position="187"/>
    </location>
</feature>
<feature type="binding site" evidence="1">
    <location>
        <begin position="14"/>
        <end position="21"/>
    </location>
    <ligand>
        <name>ATP</name>
        <dbReference type="ChEBI" id="CHEBI:30616"/>
    </ligand>
</feature>
<organism>
    <name type="scientific">Aster yellows witches'-broom phytoplasma (strain AYWB)</name>
    <dbReference type="NCBI Taxonomy" id="322098"/>
    <lineage>
        <taxon>Bacteria</taxon>
        <taxon>Bacillati</taxon>
        <taxon>Mycoplasmatota</taxon>
        <taxon>Mollicutes</taxon>
        <taxon>Acholeplasmatales</taxon>
        <taxon>Acholeplasmataceae</taxon>
        <taxon>Candidatus Phytoplasma</taxon>
        <taxon>16SrI (Aster yellows group)</taxon>
    </lineage>
</organism>
<sequence>MKLNKKGLLIILSGPSGVGKATVRKALFEMTNHNFVYSVSATTRKPRPGEQDGKDYHFLTKEEFEKGIENNCFLEWAKFIDHYYGTPKKQIQDFLKQGKEVFLEIEVEGATHLRKKRMPNTVFIFLVPPKKKDLYDRLKKRGTEQEINIVQRIAKANNEFRLAHKYDYIVVNDEVANAADRIIAIIRAEHAKTKRSIRNYLKILEDNVYAE</sequence>
<name>KGUA_AYWBP</name>
<protein>
    <recommendedName>
        <fullName evidence="1">Guanylate kinase</fullName>
        <ecNumber evidence="1">2.7.4.8</ecNumber>
    </recommendedName>
    <alternativeName>
        <fullName evidence="1">GMP kinase</fullName>
    </alternativeName>
</protein>
<keyword id="KW-0067">ATP-binding</keyword>
<keyword id="KW-0963">Cytoplasm</keyword>
<keyword id="KW-0418">Kinase</keyword>
<keyword id="KW-0547">Nucleotide-binding</keyword>
<keyword id="KW-0808">Transferase</keyword>
<evidence type="ECO:0000255" key="1">
    <source>
        <dbReference type="HAMAP-Rule" id="MF_00328"/>
    </source>
</evidence>
<gene>
    <name evidence="1" type="primary">gmk</name>
    <name type="ordered locus">AYWB_655</name>
</gene>
<proteinExistence type="inferred from homology"/>
<reference key="1">
    <citation type="journal article" date="2006" name="J. Bacteriol.">
        <title>Living with genome instability: the adaptation of phytoplasmas to diverse environments of their insect and plant hosts.</title>
        <authorList>
            <person name="Bai X."/>
            <person name="Zhang J."/>
            <person name="Ewing A."/>
            <person name="Miller S.A."/>
            <person name="Jancso Radek A."/>
            <person name="Shevchenko D.V."/>
            <person name="Tsukerman K."/>
            <person name="Walunas T."/>
            <person name="Lapidus A."/>
            <person name="Campbell J.W."/>
            <person name="Hogenhout S.A."/>
        </authorList>
    </citation>
    <scope>NUCLEOTIDE SEQUENCE [LARGE SCALE GENOMIC DNA]</scope>
    <source>
        <strain>AYWB</strain>
    </source>
</reference>
<comment type="function">
    <text evidence="1">Essential for recycling GMP and indirectly, cGMP.</text>
</comment>
<comment type="catalytic activity">
    <reaction evidence="1">
        <text>GMP + ATP = GDP + ADP</text>
        <dbReference type="Rhea" id="RHEA:20780"/>
        <dbReference type="ChEBI" id="CHEBI:30616"/>
        <dbReference type="ChEBI" id="CHEBI:58115"/>
        <dbReference type="ChEBI" id="CHEBI:58189"/>
        <dbReference type="ChEBI" id="CHEBI:456216"/>
        <dbReference type="EC" id="2.7.4.8"/>
    </reaction>
</comment>
<comment type="subcellular location">
    <subcellularLocation>
        <location evidence="1">Cytoplasm</location>
    </subcellularLocation>
</comment>
<comment type="similarity">
    <text evidence="1">Belongs to the guanylate kinase family.</text>
</comment>
<accession>Q2NIH1</accession>